<protein>
    <recommendedName>
        <fullName evidence="8">Fusicoccadiene C-8 hydroxylase</fullName>
        <ecNumber evidence="7">1.-.-.-</ecNumber>
    </recommendedName>
    <alternativeName>
        <fullName evidence="8">Cytochrome P450 monooxygenase PaP450-2</fullName>
    </alternativeName>
    <alternativeName>
        <fullName evidence="8">Fusicoccin A biosynthetic gene clusters protein 5</fullName>
    </alternativeName>
</protein>
<name>FC5_PHOAM</name>
<keyword id="KW-0325">Glycoprotein</keyword>
<keyword id="KW-0349">Heme</keyword>
<keyword id="KW-0408">Iron</keyword>
<keyword id="KW-0472">Membrane</keyword>
<keyword id="KW-0479">Metal-binding</keyword>
<keyword id="KW-0503">Monooxygenase</keyword>
<keyword id="KW-0560">Oxidoreductase</keyword>
<keyword id="KW-0812">Transmembrane</keyword>
<keyword id="KW-1133">Transmembrane helix</keyword>
<feature type="chain" id="PRO_0000445447" description="Fusicoccadiene C-8 hydroxylase">
    <location>
        <begin position="1"/>
        <end position="524"/>
    </location>
</feature>
<feature type="transmembrane region" description="Helical" evidence="2">
    <location>
        <begin position="16"/>
        <end position="36"/>
    </location>
</feature>
<feature type="binding site" description="axial binding residue" evidence="1">
    <location>
        <position position="465"/>
    </location>
    <ligand>
        <name>heme</name>
        <dbReference type="ChEBI" id="CHEBI:30413"/>
    </ligand>
    <ligandPart>
        <name>Fe</name>
        <dbReference type="ChEBI" id="CHEBI:18248"/>
    </ligandPart>
</feature>
<feature type="glycosylation site" description="N-linked (GlcNAc...) asparagine" evidence="3">
    <location>
        <position position="126"/>
    </location>
</feature>
<feature type="glycosylation site" description="N-linked (GlcNAc...) asparagine" evidence="3">
    <location>
        <position position="344"/>
    </location>
</feature>
<feature type="glycosylation site" description="N-linked (GlcNAc...) asparagine" evidence="3">
    <location>
        <position position="496"/>
    </location>
</feature>
<proteinExistence type="evidence at protein level"/>
<evidence type="ECO:0000250" key="1">
    <source>
        <dbReference type="UniProtKB" id="P04798"/>
    </source>
</evidence>
<evidence type="ECO:0000255" key="2"/>
<evidence type="ECO:0000255" key="3">
    <source>
        <dbReference type="PROSITE-ProRule" id="PRU00498"/>
    </source>
</evidence>
<evidence type="ECO:0000269" key="4">
    <source>
    </source>
</evidence>
<evidence type="ECO:0000269" key="5">
    <source>
    </source>
</evidence>
<evidence type="ECO:0000269" key="6">
    <source>
    </source>
</evidence>
<evidence type="ECO:0000269" key="7">
    <source>
    </source>
</evidence>
<evidence type="ECO:0000303" key="8">
    <source>
    </source>
</evidence>
<evidence type="ECO:0000305" key="9"/>
<gene>
    <name evidence="8" type="primary">PaP450-2</name>
    <name evidence="8" type="synonym">orf5</name>
</gene>
<comment type="function">
    <text evidence="4 5 6 7">Cytochrome P450 monooxygenase; part of the 2 gene clusters that mediate the biosynthesis of fusicoccins, diterpene glucosides that display phytohormone-like activity and function as potent activators of plasma membrane H(+)-ATPases in plants by modifying 14-3-3 proteins and cause the plant disease constriction canker (PubMed:22870285). The first step in the pathway is performed by the fusicoccadiene synthase PaFS that possesses both prenyl transferase and terpene cyclase activity, converting isopentenyl diphosphate and dimethylallyl diphosphate into geranylgeranyl diphosphate (GGDP) and successively converting GGDP into fusicocca-2,10(14)-diene, a precursor for fusicoccin H (PubMed:17360612). The second step is the oxidation at the C-8 position by the cytochrome P450 monooxygenase PaP450-2 to yield fusicocca-2,10(14)-diene-8-beta-ol (PubMed:22870285). The cytochrome P450 monooxygenase PaP450-1 then catalyzes the hydroxylation at the C-16 position to produce fusicocca-2,10(14)-diene-8-beta,16-diol (PubMed:22870285). The dioxygenase fc-dox then catalyzes the 16-oxydation of fusicocca-2,10(14)-diene-8-beta,16-diol to yield an aldehyde (8-beta-hydroxyfusicocca-1,10(14)-dien-16-al) (PubMed:21299202, PubMed:22870285). The short-chain dehydrogenase/reductase fc-sdr catalyzes the reduction of the aldehyde to yield fusicocca-1,10(14)-diene-8-beta,16-diol (PubMed:21299202, PubMed:22870285). The next step is the hydroxylation at C-9 performed by the cytochrome P450 monooxygenase PaP450-3 that leads to fusicoccin H aglycon which is glycosylated to fusicoccin H by the O-glycosyltransferase PaGT (PubMed:22870285). Hydroxylation at C-12 by the cytochrome P450 monooxygenase PaP450-4 leads then to the production of fusicoccin Q and is followed by methylation by the O-methyltransferase PaMT to yield fusicoccin P (PubMed:22870285). Fusicoccin P is further converted to fusicoccin J via prenylation by the O-glucose prenyltransferase PaPT (PubMed:22287087). Cytochrome P450 monooxygenase PaP450-5 then performs hydroxylation at C-19 to yield dideacetyl-fusicoccin A which is acetylated to 3'-O-deacetyl-fusicoccin A by the O-acetyltransferase PaAT-2 (PubMed:22870285). Finally, a another acetylation by the O-acetyltransferase PaAT-1 yields fusicoccin A (PubMed:22870285).</text>
</comment>
<comment type="cofactor">
    <cofactor evidence="1">
        <name>heme</name>
        <dbReference type="ChEBI" id="CHEBI:30413"/>
    </cofactor>
</comment>
<comment type="pathway">
    <text evidence="7">Mycotoxin biosynthesis.</text>
</comment>
<comment type="subcellular location">
    <subcellularLocation>
        <location evidence="2">Membrane</location>
        <topology evidence="2">Single-pass membrane protein</topology>
    </subcellularLocation>
</comment>
<comment type="similarity">
    <text evidence="9">Belongs to the cytochrome P450 family.</text>
</comment>
<organism>
    <name type="scientific">Phomopsis amygdali</name>
    <name type="common">Fusicoccum amygdali</name>
    <dbReference type="NCBI Taxonomy" id="1214568"/>
    <lineage>
        <taxon>Eukaryota</taxon>
        <taxon>Fungi</taxon>
        <taxon>Dikarya</taxon>
        <taxon>Ascomycota</taxon>
        <taxon>Pezizomycotina</taxon>
        <taxon>Sordariomycetes</taxon>
        <taxon>Sordariomycetidae</taxon>
        <taxon>Diaporthales</taxon>
        <taxon>Diaporthaceae</taxon>
        <taxon>Diaporthe</taxon>
    </lineage>
</organism>
<reference key="1">
    <citation type="journal article" date="2012" name="PLoS ONE">
        <title>Molecular breeding of a fungus producing a precursor diterpene suitable for semi-synthesis by dissection of the biosynthetic machinery.</title>
        <authorList>
            <person name="Noike M."/>
            <person name="Ono Y."/>
            <person name="Araki Y."/>
            <person name="Tanio R."/>
            <person name="Higuchi Y."/>
            <person name="Nitta H."/>
            <person name="Hamano Y."/>
            <person name="Toyomasu T."/>
            <person name="Sassa T."/>
            <person name="Kato N."/>
            <person name="Dairi T."/>
        </authorList>
    </citation>
    <scope>NUCLEOTIDE SEQUENCE [MRNA]</scope>
    <scope>FUNCTION</scope>
    <scope>CATALYTIC ACTIVITY</scope>
    <scope>PATHWAY</scope>
</reference>
<reference key="2">
    <citation type="journal article" date="2007" name="Proc. Natl. Acad. Sci. U.S.A.">
        <title>Fusicoccins are biosynthesized by an unusual chimera diterpene synthase in fungi.</title>
        <authorList>
            <person name="Toyomasu T."/>
            <person name="Tsukahara M."/>
            <person name="Kaneko A."/>
            <person name="Niida R."/>
            <person name="Mitsuhashi W."/>
            <person name="Dairi T."/>
            <person name="Kato N."/>
            <person name="Sassa T."/>
        </authorList>
    </citation>
    <scope>FUNCTION</scope>
</reference>
<reference key="3">
    <citation type="journal article" date="2011" name="J. Am. Chem. Soc.">
        <title>Dioxygenases, key enzymes to determine the aglycon structures of fusicoccin and brassicicene, diterpene compounds produced by fungi.</title>
        <authorList>
            <person name="Ono Y."/>
            <person name="Minami A."/>
            <person name="Noike M."/>
            <person name="Higuchi Y."/>
            <person name="Toyomasu T."/>
            <person name="Sassa T."/>
            <person name="Kato N."/>
            <person name="Dairi T."/>
        </authorList>
    </citation>
    <scope>FUNCTION</scope>
</reference>
<reference key="4">
    <citation type="journal article" date="2012" name="ChemBioChem">
        <title>An enzyme catalyzing O-prenylation of the glucose moiety of fusicoccin A, a diterpene glucoside produced by the fungus Phomopsis amygdali.</title>
        <authorList>
            <person name="Noike M."/>
            <person name="Liu C."/>
            <person name="Ono Y."/>
            <person name="Hamano Y."/>
            <person name="Toyomasu T."/>
            <person name="Sassa T."/>
            <person name="Kato N."/>
            <person name="Dairi T."/>
        </authorList>
    </citation>
    <scope>FUNCTION</scope>
</reference>
<dbReference type="EC" id="1.-.-.-" evidence="7"/>
<dbReference type="EMBL" id="AB686271">
    <property type="protein sequence ID" value="BAM71030.1"/>
    <property type="molecule type" value="mRNA"/>
</dbReference>
<dbReference type="SMR" id="L0N063"/>
<dbReference type="GlyCosmos" id="L0N063">
    <property type="glycosylation" value="3 sites, No reported glycans"/>
</dbReference>
<dbReference type="GO" id="GO:0016020">
    <property type="term" value="C:membrane"/>
    <property type="evidence" value="ECO:0007669"/>
    <property type="project" value="UniProtKB-SubCell"/>
</dbReference>
<dbReference type="GO" id="GO:0020037">
    <property type="term" value="F:heme binding"/>
    <property type="evidence" value="ECO:0007669"/>
    <property type="project" value="InterPro"/>
</dbReference>
<dbReference type="GO" id="GO:0005506">
    <property type="term" value="F:iron ion binding"/>
    <property type="evidence" value="ECO:0007669"/>
    <property type="project" value="InterPro"/>
</dbReference>
<dbReference type="GO" id="GO:0004497">
    <property type="term" value="F:monooxygenase activity"/>
    <property type="evidence" value="ECO:0007669"/>
    <property type="project" value="UniProtKB-KW"/>
</dbReference>
<dbReference type="GO" id="GO:0016705">
    <property type="term" value="F:oxidoreductase activity, acting on paired donors, with incorporation or reduction of molecular oxygen"/>
    <property type="evidence" value="ECO:0007669"/>
    <property type="project" value="InterPro"/>
</dbReference>
<dbReference type="CDD" id="cd11062">
    <property type="entry name" value="CYP58-like"/>
    <property type="match status" value="1"/>
</dbReference>
<dbReference type="Gene3D" id="1.10.630.10">
    <property type="entry name" value="Cytochrome P450"/>
    <property type="match status" value="1"/>
</dbReference>
<dbReference type="InterPro" id="IPR001128">
    <property type="entry name" value="Cyt_P450"/>
</dbReference>
<dbReference type="InterPro" id="IPR002403">
    <property type="entry name" value="Cyt_P450_E_grp-IV"/>
</dbReference>
<dbReference type="InterPro" id="IPR036396">
    <property type="entry name" value="Cyt_P450_sf"/>
</dbReference>
<dbReference type="InterPro" id="IPR050121">
    <property type="entry name" value="Cytochrome_P450_monoxygenase"/>
</dbReference>
<dbReference type="PANTHER" id="PTHR24305">
    <property type="entry name" value="CYTOCHROME P450"/>
    <property type="match status" value="1"/>
</dbReference>
<dbReference type="PANTHER" id="PTHR24305:SF157">
    <property type="entry name" value="N-ACETYLTRYPTOPHAN 6-HYDROXYLASE IVOC-RELATED"/>
    <property type="match status" value="1"/>
</dbReference>
<dbReference type="Pfam" id="PF00067">
    <property type="entry name" value="p450"/>
    <property type="match status" value="1"/>
</dbReference>
<dbReference type="PRINTS" id="PR00465">
    <property type="entry name" value="EP450IV"/>
</dbReference>
<dbReference type="PRINTS" id="PR00385">
    <property type="entry name" value="P450"/>
</dbReference>
<dbReference type="SUPFAM" id="SSF48264">
    <property type="entry name" value="Cytochrome P450"/>
    <property type="match status" value="1"/>
</dbReference>
<sequence>MSTLQGLLDALQHHKLQLLCIGPLVYACVSFIIKIVYRIYFHPLAKFPGPKIAAATHLYEVAWDYFGQGAYLYEIQRMHEKYGPIVRINPIELSVNDPEFYNVLYVGGSVRKTNALPSFGDGMDFNGSHGMTVDHDHHRLRRKPMEPFFSKGSIARLEDRLQELTVTLVQRLHEYRGTGRVLRLDHVFAAMAGDVVNVLCIANPTMSFLRHSDFNPYWYELFHTLIRSMPLFMNFPWVIKIVRLIPTSLLEKLDPRSQMFRDWRMMSVNHIIDAKQRKERGLIFVNEEDKMKCETLFDHIVNSDLPEAELSVERLASEAQVVMGAGTVTTARTMDFLAVRILLNDSVCQRLRDELREPMKDFPERIPSYAELEKLPWLQACIKEALRLSPGLTHRLPRVSPHEELIYKDWVIPRNTPVGMSALFMHMDPLVYKDPTEYRPERWLEDVTPEMHRNYVPFTKGSRRCLGVELSYAEITLVFASLFGPKGPKLKLYETNESDGDPACHFLLPLPRLDSKGIRVTVEA</sequence>
<accession>L0N063</accession>